<gene>
    <name evidence="1" type="primary">rpl29</name>
    <name type="ordered locus">NP_4868A</name>
</gene>
<protein>
    <recommendedName>
        <fullName evidence="1">Large ribosomal subunit protein uL29</fullName>
    </recommendedName>
    <alternativeName>
        <fullName evidence="2">50S ribosomal protein L29</fullName>
    </alternativeName>
</protein>
<reference key="1">
    <citation type="journal article" date="2005" name="Genome Res.">
        <title>Living with two extremes: conclusions from the genome sequence of Natronomonas pharaonis.</title>
        <authorList>
            <person name="Falb M."/>
            <person name="Pfeiffer F."/>
            <person name="Palm P."/>
            <person name="Rodewald K."/>
            <person name="Hickmann V."/>
            <person name="Tittor J."/>
            <person name="Oesterhelt D."/>
        </authorList>
    </citation>
    <scope>NUCLEOTIDE SEQUENCE [LARGE SCALE GENOMIC DNA]</scope>
    <source>
        <strain>ATCC 35678 / DSM 2160 / CIP 103997 / JCM 8858 / NBRC 14720 / NCIMB 2260 / Gabara</strain>
    </source>
</reference>
<name>RL29_NATPD</name>
<accession>Q3IMY1</accession>
<dbReference type="EMBL" id="CR936257">
    <property type="protein sequence ID" value="CAI50525.1"/>
    <property type="molecule type" value="Genomic_DNA"/>
</dbReference>
<dbReference type="RefSeq" id="WP_011324137.1">
    <property type="nucleotide sequence ID" value="NC_007426.1"/>
</dbReference>
<dbReference type="SMR" id="Q3IMY1"/>
<dbReference type="STRING" id="348780.NP_4868A"/>
<dbReference type="EnsemblBacteria" id="CAI50525">
    <property type="protein sequence ID" value="CAI50525"/>
    <property type="gene ID" value="NP_4868A"/>
</dbReference>
<dbReference type="GeneID" id="3703136"/>
<dbReference type="KEGG" id="nph:NP_4868A"/>
<dbReference type="eggNOG" id="arCOG00785">
    <property type="taxonomic scope" value="Archaea"/>
</dbReference>
<dbReference type="HOGENOM" id="CLU_158491_2_2_2"/>
<dbReference type="OrthoDB" id="11736at2157"/>
<dbReference type="Proteomes" id="UP000002698">
    <property type="component" value="Chromosome"/>
</dbReference>
<dbReference type="GO" id="GO:1990904">
    <property type="term" value="C:ribonucleoprotein complex"/>
    <property type="evidence" value="ECO:0007669"/>
    <property type="project" value="UniProtKB-KW"/>
</dbReference>
<dbReference type="GO" id="GO:0005840">
    <property type="term" value="C:ribosome"/>
    <property type="evidence" value="ECO:0007669"/>
    <property type="project" value="UniProtKB-KW"/>
</dbReference>
<dbReference type="GO" id="GO:0003735">
    <property type="term" value="F:structural constituent of ribosome"/>
    <property type="evidence" value="ECO:0007669"/>
    <property type="project" value="InterPro"/>
</dbReference>
<dbReference type="GO" id="GO:0006412">
    <property type="term" value="P:translation"/>
    <property type="evidence" value="ECO:0007669"/>
    <property type="project" value="UniProtKB-UniRule"/>
</dbReference>
<dbReference type="FunFam" id="1.10.287.310:FF:000001">
    <property type="entry name" value="50S ribosomal protein L29"/>
    <property type="match status" value="1"/>
</dbReference>
<dbReference type="Gene3D" id="1.10.287.310">
    <property type="match status" value="1"/>
</dbReference>
<dbReference type="HAMAP" id="MF_00374">
    <property type="entry name" value="Ribosomal_uL29"/>
    <property type="match status" value="1"/>
</dbReference>
<dbReference type="InterPro" id="IPR001854">
    <property type="entry name" value="Ribosomal_uL29"/>
</dbReference>
<dbReference type="InterPro" id="IPR018254">
    <property type="entry name" value="Ribosomal_uL29_CS"/>
</dbReference>
<dbReference type="InterPro" id="IPR036049">
    <property type="entry name" value="Ribosomal_uL29_sf"/>
</dbReference>
<dbReference type="NCBIfam" id="TIGR00012">
    <property type="entry name" value="L29"/>
    <property type="match status" value="1"/>
</dbReference>
<dbReference type="Pfam" id="PF00831">
    <property type="entry name" value="Ribosomal_L29"/>
    <property type="match status" value="1"/>
</dbReference>
<dbReference type="SUPFAM" id="SSF46561">
    <property type="entry name" value="Ribosomal protein L29 (L29p)"/>
    <property type="match status" value="1"/>
</dbReference>
<dbReference type="PROSITE" id="PS00579">
    <property type="entry name" value="RIBOSOMAL_L29"/>
    <property type="match status" value="1"/>
</dbReference>
<feature type="chain" id="PRO_1000007538" description="Large ribosomal subunit protein uL29">
    <location>
        <begin position="1"/>
        <end position="69"/>
    </location>
</feature>
<proteinExistence type="inferred from homology"/>
<comment type="similarity">
    <text evidence="1">Belongs to the universal ribosomal protein uL29 family.</text>
</comment>
<organism>
    <name type="scientific">Natronomonas pharaonis (strain ATCC 35678 / DSM 2160 / CIP 103997 / JCM 8858 / NBRC 14720 / NCIMB 2260 / Gabara)</name>
    <name type="common">Halobacterium pharaonis</name>
    <dbReference type="NCBI Taxonomy" id="348780"/>
    <lineage>
        <taxon>Archaea</taxon>
        <taxon>Methanobacteriati</taxon>
        <taxon>Methanobacteriota</taxon>
        <taxon>Stenosarchaea group</taxon>
        <taxon>Halobacteria</taxon>
        <taxon>Halobacteriales</taxon>
        <taxon>Haloarculaceae</taxon>
        <taxon>Natronomonas</taxon>
    </lineage>
</organism>
<sequence length="69" mass="7717">MAILHVDEIRDMTAAEREVELEQLETELLNEKAVLAAGGAPENPGRIGELKRTIARVKTIQREEGDFDE</sequence>
<keyword id="KW-1185">Reference proteome</keyword>
<keyword id="KW-0687">Ribonucleoprotein</keyword>
<keyword id="KW-0689">Ribosomal protein</keyword>
<evidence type="ECO:0000255" key="1">
    <source>
        <dbReference type="HAMAP-Rule" id="MF_00374"/>
    </source>
</evidence>
<evidence type="ECO:0000305" key="2"/>